<name>MMD1_ARATH</name>
<reference key="1">
    <citation type="journal article" date="2000" name="Nature">
        <title>Sequence and analysis of chromosome 1 of the plant Arabidopsis thaliana.</title>
        <authorList>
            <person name="Theologis A."/>
            <person name="Ecker J.R."/>
            <person name="Palm C.J."/>
            <person name="Federspiel N.A."/>
            <person name="Kaul S."/>
            <person name="White O."/>
            <person name="Alonso J."/>
            <person name="Altafi H."/>
            <person name="Araujo R."/>
            <person name="Bowman C.L."/>
            <person name="Brooks S.Y."/>
            <person name="Buehler E."/>
            <person name="Chan A."/>
            <person name="Chao Q."/>
            <person name="Chen H."/>
            <person name="Cheuk R.F."/>
            <person name="Chin C.W."/>
            <person name="Chung M.K."/>
            <person name="Conn L."/>
            <person name="Conway A.B."/>
            <person name="Conway A.R."/>
            <person name="Creasy T.H."/>
            <person name="Dewar K."/>
            <person name="Dunn P."/>
            <person name="Etgu P."/>
            <person name="Feldblyum T.V."/>
            <person name="Feng J.-D."/>
            <person name="Fong B."/>
            <person name="Fujii C.Y."/>
            <person name="Gill J.E."/>
            <person name="Goldsmith A.D."/>
            <person name="Haas B."/>
            <person name="Hansen N.F."/>
            <person name="Hughes B."/>
            <person name="Huizar L."/>
            <person name="Hunter J.L."/>
            <person name="Jenkins J."/>
            <person name="Johnson-Hopson C."/>
            <person name="Khan S."/>
            <person name="Khaykin E."/>
            <person name="Kim C.J."/>
            <person name="Koo H.L."/>
            <person name="Kremenetskaia I."/>
            <person name="Kurtz D.B."/>
            <person name="Kwan A."/>
            <person name="Lam B."/>
            <person name="Langin-Hooper S."/>
            <person name="Lee A."/>
            <person name="Lee J.M."/>
            <person name="Lenz C.A."/>
            <person name="Li J.H."/>
            <person name="Li Y.-P."/>
            <person name="Lin X."/>
            <person name="Liu S.X."/>
            <person name="Liu Z.A."/>
            <person name="Luros J.S."/>
            <person name="Maiti R."/>
            <person name="Marziali A."/>
            <person name="Militscher J."/>
            <person name="Miranda M."/>
            <person name="Nguyen M."/>
            <person name="Nierman W.C."/>
            <person name="Osborne B.I."/>
            <person name="Pai G."/>
            <person name="Peterson J."/>
            <person name="Pham P.K."/>
            <person name="Rizzo M."/>
            <person name="Rooney T."/>
            <person name="Rowley D."/>
            <person name="Sakano H."/>
            <person name="Salzberg S.L."/>
            <person name="Schwartz J.R."/>
            <person name="Shinn P."/>
            <person name="Southwick A.M."/>
            <person name="Sun H."/>
            <person name="Tallon L.J."/>
            <person name="Tambunga G."/>
            <person name="Toriumi M.J."/>
            <person name="Town C.D."/>
            <person name="Utterback T."/>
            <person name="Van Aken S."/>
            <person name="Vaysberg M."/>
            <person name="Vysotskaia V.S."/>
            <person name="Walker M."/>
            <person name="Wu D."/>
            <person name="Yu G."/>
            <person name="Fraser C.M."/>
            <person name="Venter J.C."/>
            <person name="Davis R.W."/>
        </authorList>
    </citation>
    <scope>NUCLEOTIDE SEQUENCE [LARGE SCALE GENOMIC DNA]</scope>
    <source>
        <strain>cv. Columbia</strain>
    </source>
</reference>
<reference key="2">
    <citation type="journal article" date="2017" name="Plant J.">
        <title>Araport11: a complete reannotation of the Arabidopsis thaliana reference genome.</title>
        <authorList>
            <person name="Cheng C.Y."/>
            <person name="Krishnakumar V."/>
            <person name="Chan A.P."/>
            <person name="Thibaud-Nissen F."/>
            <person name="Schobel S."/>
            <person name="Town C.D."/>
        </authorList>
    </citation>
    <scope>GENOME REANNOTATION</scope>
    <source>
        <strain>cv. Columbia</strain>
    </source>
</reference>
<reference key="3">
    <citation type="journal article" date="2003" name="Development">
        <title>The DUET gene is necessary for chromosome organization and progression during male meiosis in Arabidopsis and encodes a PHD finger protein.</title>
        <authorList>
            <person name="Reddy T.V."/>
            <person name="Kaur J."/>
            <person name="Agashe B."/>
            <person name="Sundaresan V."/>
            <person name="Siddiqi I."/>
        </authorList>
    </citation>
    <scope>NUCLEOTIDE SEQUENCE [MRNA]</scope>
    <scope>FUNCTION</scope>
    <scope>DISRUPTION PHENOTYPE</scope>
    <scope>TISSUE SPECIFICITY</scope>
    <scope>DEVELOPMENTAL STAGE</scope>
</reference>
<reference key="4">
    <citation type="journal article" date="2003" name="Plant Cell">
        <title>The Arabidopsis MALE MEIOCYTE DEATH1 gene encodes a PHD-finger protein that is required for male meiosis.</title>
        <authorList>
            <person name="Yang X."/>
            <person name="Makaroff C.A."/>
            <person name="Ma H."/>
        </authorList>
    </citation>
    <scope>NUCLEOTIDE SEQUENCE [MRNA]</scope>
    <scope>FUNCTION</scope>
    <scope>DISRUPTION PHENOTYPE</scope>
    <scope>TISSUE SPECIFICITY</scope>
    <scope>DEVELOPMENTAL STAGE</scope>
    <scope>SUBCELLULAR LOCATION</scope>
    <source>
        <strain>cv. Landsberg erecta</strain>
    </source>
</reference>
<reference key="5">
    <citation type="journal article" date="2016" name="Plant Cell">
        <title>The PHD Finger Protein MMD1/DUET Ensures the Progression of Male Meiotic Chromosome Condensation and Directly Regulates the Expression of the Condensin Gene CAP-D3.</title>
        <authorList>
            <person name="Wang J."/>
            <person name="Niu B."/>
            <person name="Huang J."/>
            <person name="Wang H."/>
            <person name="Yang X."/>
            <person name="Dong A."/>
            <person name="Makaroff C."/>
            <person name="Ma H."/>
            <person name="Wang Y."/>
        </authorList>
    </citation>
    <scope>FUNCTION</scope>
    <scope>DISRUPTION PHENOTYPE</scope>
    <scope>TISSUE SPECIFICITY</scope>
    <source>
        <strain>cv. Columbia</strain>
        <strain>cv. Landsberg erecta</strain>
    </source>
</reference>
<reference key="6">
    <citation type="journal article" date="2020" name="Nat. Plants">
        <title>Cell-type-dependent histone demethylase specificity promotes meiotic chromosome condensation in Arabidopsis.</title>
        <authorList>
            <person name="Wang J."/>
            <person name="Yu C."/>
            <person name="Zhang S."/>
            <person name="Ye J."/>
            <person name="Dai H."/>
            <person name="Wang H."/>
            <person name="Huang J."/>
            <person name="Cao X."/>
            <person name="Ma J."/>
            <person name="Ma H."/>
            <person name="Wang Y."/>
        </authorList>
    </citation>
    <scope>FUNCTION</scope>
    <scope>DISRUPTION PHENOTYPE</scope>
    <scope>INTERACTION WITH JMJ16</scope>
    <scope>SUBCELLULAR LOCATION</scope>
    <source>
        <strain>cv. Columbia</strain>
    </source>
</reference>
<protein>
    <recommendedName>
        <fullName evidence="6">PHD finger protein MALE MEIOCYTE DEATH 1</fullName>
    </recommendedName>
</protein>
<gene>
    <name evidence="6" type="primary">MMD1</name>
    <name evidence="7" type="synonym">DUET</name>
    <name evidence="9" type="ordered locus">At1g66170</name>
    <name evidence="10" type="ORF">F15E12.11</name>
</gene>
<accession>Q7X6Y7</accession>
<accession>Q9C8D0</accession>
<organism>
    <name type="scientific">Arabidopsis thaliana</name>
    <name type="common">Mouse-ear cress</name>
    <dbReference type="NCBI Taxonomy" id="3702"/>
    <lineage>
        <taxon>Eukaryota</taxon>
        <taxon>Viridiplantae</taxon>
        <taxon>Streptophyta</taxon>
        <taxon>Embryophyta</taxon>
        <taxon>Tracheophyta</taxon>
        <taxon>Spermatophyta</taxon>
        <taxon>Magnoliopsida</taxon>
        <taxon>eudicotyledons</taxon>
        <taxon>Gunneridae</taxon>
        <taxon>Pentapetalae</taxon>
        <taxon>rosids</taxon>
        <taxon>malvids</taxon>
        <taxon>Brassicales</taxon>
        <taxon>Brassicaceae</taxon>
        <taxon>Camelineae</taxon>
        <taxon>Arabidopsis</taxon>
    </lineage>
</organism>
<evidence type="ECO:0000255" key="1">
    <source>
        <dbReference type="PROSITE-ProRule" id="PRU00146"/>
    </source>
</evidence>
<evidence type="ECO:0000269" key="2">
    <source>
    </source>
</evidence>
<evidence type="ECO:0000269" key="3">
    <source>
    </source>
</evidence>
<evidence type="ECO:0000269" key="4">
    <source>
    </source>
</evidence>
<evidence type="ECO:0000269" key="5">
    <source>
    </source>
</evidence>
<evidence type="ECO:0000303" key="6">
    <source>
    </source>
</evidence>
<evidence type="ECO:0000303" key="7">
    <source>
    </source>
</evidence>
<evidence type="ECO:0000305" key="8"/>
<evidence type="ECO:0000312" key="9">
    <source>
        <dbReference type="Araport" id="AT1G66170"/>
    </source>
</evidence>
<evidence type="ECO:0000312" key="10">
    <source>
        <dbReference type="EMBL" id="AAG51303.1"/>
    </source>
</evidence>
<proteinExistence type="evidence at protein level"/>
<dbReference type="EMBL" id="AC026480">
    <property type="protein sequence ID" value="AAG51303.1"/>
    <property type="status" value="ALT_SEQ"/>
    <property type="molecule type" value="Genomic_DNA"/>
</dbReference>
<dbReference type="EMBL" id="CP002684">
    <property type="protein sequence ID" value="AEE34471.1"/>
    <property type="molecule type" value="Genomic_DNA"/>
</dbReference>
<dbReference type="EMBL" id="AY305007">
    <property type="protein sequence ID" value="AAP69944.1"/>
    <property type="molecule type" value="mRNA"/>
</dbReference>
<dbReference type="EMBL" id="AY158082">
    <property type="protein sequence ID" value="AAO16873.1"/>
    <property type="molecule type" value="mRNA"/>
</dbReference>
<dbReference type="PIR" id="E96686">
    <property type="entry name" value="E96686"/>
</dbReference>
<dbReference type="RefSeq" id="NP_176791.2">
    <property type="nucleotide sequence ID" value="NM_105288.2"/>
</dbReference>
<dbReference type="FunCoup" id="Q7X6Y7">
    <property type="interactions" value="20"/>
</dbReference>
<dbReference type="STRING" id="3702.Q7X6Y7"/>
<dbReference type="GlyGen" id="Q7X6Y7">
    <property type="glycosylation" value="1 site"/>
</dbReference>
<dbReference type="PaxDb" id="3702-AT1G66170.1"/>
<dbReference type="EnsemblPlants" id="AT1G66170.1">
    <property type="protein sequence ID" value="AT1G66170.1"/>
    <property type="gene ID" value="AT1G66170"/>
</dbReference>
<dbReference type="GeneID" id="842932"/>
<dbReference type="Gramene" id="AT1G66170.1">
    <property type="protein sequence ID" value="AT1G66170.1"/>
    <property type="gene ID" value="AT1G66170"/>
</dbReference>
<dbReference type="KEGG" id="ath:AT1G66170"/>
<dbReference type="Araport" id="AT1G66170"/>
<dbReference type="TAIR" id="AT1G66170">
    <property type="gene designation" value="MMD1"/>
</dbReference>
<dbReference type="eggNOG" id="KOG1844">
    <property type="taxonomic scope" value="Eukaryota"/>
</dbReference>
<dbReference type="HOGENOM" id="CLU_012141_0_0_1"/>
<dbReference type="InParanoid" id="Q7X6Y7"/>
<dbReference type="OMA" id="RCSGWSH"/>
<dbReference type="PhylomeDB" id="Q7X6Y7"/>
<dbReference type="PRO" id="PR:Q7X6Y7"/>
<dbReference type="Proteomes" id="UP000006548">
    <property type="component" value="Chromosome 1"/>
</dbReference>
<dbReference type="ExpressionAtlas" id="Q7X6Y7">
    <property type="expression patterns" value="baseline and differential"/>
</dbReference>
<dbReference type="GO" id="GO:0000791">
    <property type="term" value="C:euchromatin"/>
    <property type="evidence" value="ECO:0000314"/>
    <property type="project" value="TAIR"/>
</dbReference>
<dbReference type="GO" id="GO:0005634">
    <property type="term" value="C:nucleus"/>
    <property type="evidence" value="ECO:0000314"/>
    <property type="project" value="UniProtKB"/>
</dbReference>
<dbReference type="GO" id="GO:0003677">
    <property type="term" value="F:DNA binding"/>
    <property type="evidence" value="ECO:0000353"/>
    <property type="project" value="TAIR"/>
</dbReference>
<dbReference type="GO" id="GO:1990188">
    <property type="term" value="F:euchromatin binding"/>
    <property type="evidence" value="ECO:0000314"/>
    <property type="project" value="TAIR"/>
</dbReference>
<dbReference type="GO" id="GO:0042393">
    <property type="term" value="F:histone binding"/>
    <property type="evidence" value="ECO:0000314"/>
    <property type="project" value="TAIR"/>
</dbReference>
<dbReference type="GO" id="GO:0043565">
    <property type="term" value="F:sequence-specific DNA binding"/>
    <property type="evidence" value="ECO:0000314"/>
    <property type="project" value="TAIR"/>
</dbReference>
<dbReference type="GO" id="GO:0000976">
    <property type="term" value="F:transcription cis-regulatory region binding"/>
    <property type="evidence" value="ECO:0000314"/>
    <property type="project" value="TAIR"/>
</dbReference>
<dbReference type="GO" id="GO:0008270">
    <property type="term" value="F:zinc ion binding"/>
    <property type="evidence" value="ECO:0007669"/>
    <property type="project" value="UniProtKB-KW"/>
</dbReference>
<dbReference type="GO" id="GO:0007060">
    <property type="term" value="P:male meiosis chromosome segregation"/>
    <property type="evidence" value="ECO:0000315"/>
    <property type="project" value="UniProtKB"/>
</dbReference>
<dbReference type="GO" id="GO:0007140">
    <property type="term" value="P:male meiotic nuclear division"/>
    <property type="evidence" value="ECO:0000315"/>
    <property type="project" value="TAIR"/>
</dbReference>
<dbReference type="GO" id="GO:0051321">
    <property type="term" value="P:meiotic cell cycle"/>
    <property type="evidence" value="ECO:0000316"/>
    <property type="project" value="TAIR"/>
</dbReference>
<dbReference type="GO" id="GO:0010032">
    <property type="term" value="P:meiotic chromosome condensation"/>
    <property type="evidence" value="ECO:0000315"/>
    <property type="project" value="UniProtKB"/>
</dbReference>
<dbReference type="GO" id="GO:0000212">
    <property type="term" value="P:meiotic spindle organization"/>
    <property type="evidence" value="ECO:0000316"/>
    <property type="project" value="TAIR"/>
</dbReference>
<dbReference type="GO" id="GO:0048235">
    <property type="term" value="P:pollen sperm cell differentiation"/>
    <property type="evidence" value="ECO:0000315"/>
    <property type="project" value="UniProtKB"/>
</dbReference>
<dbReference type="GO" id="GO:1905821">
    <property type="term" value="P:positive regulation of chromosome condensation"/>
    <property type="evidence" value="ECO:0000315"/>
    <property type="project" value="UniProtKB"/>
</dbReference>
<dbReference type="GO" id="GO:0010628">
    <property type="term" value="P:positive regulation of gene expression"/>
    <property type="evidence" value="ECO:0000315"/>
    <property type="project" value="UniProtKB"/>
</dbReference>
<dbReference type="GO" id="GO:0006355">
    <property type="term" value="P:regulation of DNA-templated transcription"/>
    <property type="evidence" value="ECO:0000315"/>
    <property type="project" value="TAIR"/>
</dbReference>
<dbReference type="CDD" id="cd15556">
    <property type="entry name" value="PHD_MMD1_like"/>
    <property type="match status" value="1"/>
</dbReference>
<dbReference type="FunFam" id="3.30.40.10:FF:000554">
    <property type="entry name" value="PHD finger protein MALE STERILITY 1"/>
    <property type="match status" value="1"/>
</dbReference>
<dbReference type="Gene3D" id="3.30.40.10">
    <property type="entry name" value="Zinc/RING finger domain, C3HC4 (zinc finger)"/>
    <property type="match status" value="1"/>
</dbReference>
<dbReference type="InterPro" id="IPR019786">
    <property type="entry name" value="Zinc_finger_PHD-type_CS"/>
</dbReference>
<dbReference type="InterPro" id="IPR011011">
    <property type="entry name" value="Znf_FYVE_PHD"/>
</dbReference>
<dbReference type="InterPro" id="IPR001965">
    <property type="entry name" value="Znf_PHD"/>
</dbReference>
<dbReference type="InterPro" id="IPR019787">
    <property type="entry name" value="Znf_PHD-finger"/>
</dbReference>
<dbReference type="InterPro" id="IPR013083">
    <property type="entry name" value="Znf_RING/FYVE/PHD"/>
</dbReference>
<dbReference type="PANTHER" id="PTHR46201:SF9">
    <property type="entry name" value="PHD FINGER PROTEIN MALE MEIOCYTE DEATH 1"/>
    <property type="match status" value="1"/>
</dbReference>
<dbReference type="PANTHER" id="PTHR46201">
    <property type="entry name" value="PHD FINGER PROTEIN MALE MEIOCYTE DEATH 1-RELATED"/>
    <property type="match status" value="1"/>
</dbReference>
<dbReference type="Pfam" id="PF00628">
    <property type="entry name" value="PHD"/>
    <property type="match status" value="1"/>
</dbReference>
<dbReference type="SMART" id="SM00249">
    <property type="entry name" value="PHD"/>
    <property type="match status" value="1"/>
</dbReference>
<dbReference type="SUPFAM" id="SSF57903">
    <property type="entry name" value="FYVE/PHD zinc finger"/>
    <property type="match status" value="1"/>
</dbReference>
<dbReference type="PROSITE" id="PS01359">
    <property type="entry name" value="ZF_PHD_1"/>
    <property type="match status" value="1"/>
</dbReference>
<comment type="function">
    <text evidence="2 3 4 5">Probable transcription factor required for chromosome organization and progression during male meiosis (e.g. microsporogenesis) (PubMed:12782723, PubMed:14573517). Necessary for fertility and meiotic progressive compaction of prophase I chromosomes to metaphase I bivalents (PubMed:27385818). Together with JMJ16, promotes gene expression in male meiocytes in an H3K9me3-dependent manner, and contributes to meiotic chromosome condensation by triggering some condensin promoters (e.g. CAP-D3 and CAP-H) (PubMed:27385818, PubMed:32572214).</text>
</comment>
<comment type="subunit">
    <text evidence="5">Interacts with JMJ16 in the nucleus of male meiocytes, especially on pachytene chromosomes.</text>
</comment>
<comment type="subcellular location">
    <subcellularLocation>
        <location evidence="2 5">Nucleus</location>
    </subcellularLocation>
</comment>
<comment type="tissue specificity">
    <text evidence="2 3 4">Expressed in inflorescence, specifically in male meiocytes.</text>
</comment>
<comment type="developmental stage">
    <text evidence="2 3">First detected in sporogenous cells at late anther stage 4. Maximum levels observed in male meiocytes at anther stage 5, prior to meiosis. Fades out at anther stage 6, during meiosis to disappear later. Also present at low levels in the placenta of very young pistils.</text>
</comment>
<comment type="disruption phenotype">
    <text evidence="2 3 4 5">Male sterile that lacks pollen and undergoes an aberrant male meiosis resulting in the formation of two uni- to tri-nucleate cells instead of a normal tetrad, accompanied by aberrant chromosomal organization from diplotene followed by metaphase 1 arrest. After, male meiocytes exhibit signs of apoptosis, including defects in chromosome behavior, cytoplasmic shrinkage, and chromatin fragmentation, followed by cell death before cytokinesis. Reduced expression of several condensin genes in meiocytes leading to defective meiotic chromosome condensation in male meiocytes (PubMed:27385818, PubMed:32572214). Increased H3K9me3 levels specifically in male meiocytes leading to greater number of down-regulated than up-regulated genes (PubMed:32572214).</text>
</comment>
<comment type="sequence caution" evidence="8">
    <conflict type="erroneous gene model prediction">
        <sequence resource="EMBL-CDS" id="AAG51303"/>
    </conflict>
</comment>
<keyword id="KW-0469">Meiosis</keyword>
<keyword id="KW-0479">Metal-binding</keyword>
<keyword id="KW-0539">Nucleus</keyword>
<keyword id="KW-1185">Reference proteome</keyword>
<keyword id="KW-0804">Transcription</keyword>
<keyword id="KW-0805">Transcription regulation</keyword>
<keyword id="KW-0862">Zinc</keyword>
<keyword id="KW-0863">Zinc-finger</keyword>
<feature type="chain" id="PRO_0000405994" description="PHD finger protein MALE MEIOCYTE DEATH 1">
    <location>
        <begin position="1"/>
        <end position="704"/>
    </location>
</feature>
<feature type="zinc finger region" description="PHD-type" evidence="1">
    <location>
        <begin position="606"/>
        <end position="656"/>
    </location>
</feature>
<feature type="binding site" evidence="1">
    <location>
        <position position="609"/>
    </location>
    <ligand>
        <name>Zn(2+)</name>
        <dbReference type="ChEBI" id="CHEBI:29105"/>
        <label>1</label>
    </ligand>
</feature>
<feature type="binding site" evidence="1">
    <location>
        <position position="611"/>
    </location>
    <ligand>
        <name>Zn(2+)</name>
        <dbReference type="ChEBI" id="CHEBI:29105"/>
        <label>1</label>
    </ligand>
</feature>
<feature type="binding site" evidence="1">
    <location>
        <position position="624"/>
    </location>
    <ligand>
        <name>Zn(2+)</name>
        <dbReference type="ChEBI" id="CHEBI:29105"/>
        <label>2</label>
    </ligand>
</feature>
<feature type="binding site" evidence="1">
    <location>
        <position position="627"/>
    </location>
    <ligand>
        <name>Zn(2+)</name>
        <dbReference type="ChEBI" id="CHEBI:29105"/>
        <label>2</label>
    </ligand>
</feature>
<feature type="binding site" evidence="1">
    <location>
        <position position="632"/>
    </location>
    <ligand>
        <name>Zn(2+)</name>
        <dbReference type="ChEBI" id="CHEBI:29105"/>
        <label>1</label>
    </ligand>
</feature>
<feature type="binding site" evidence="1">
    <location>
        <position position="635"/>
    </location>
    <ligand>
        <name>Zn(2+)</name>
        <dbReference type="ChEBI" id="CHEBI:29105"/>
        <label>1</label>
    </ligand>
</feature>
<feature type="binding site" evidence="1">
    <location>
        <position position="650"/>
    </location>
    <ligand>
        <name>Zn(2+)</name>
        <dbReference type="ChEBI" id="CHEBI:29105"/>
        <label>2</label>
    </ligand>
</feature>
<feature type="binding site" evidence="1">
    <location>
        <position position="653"/>
    </location>
    <ligand>
        <name>Zn(2+)</name>
        <dbReference type="ChEBI" id="CHEBI:29105"/>
        <label>2</label>
    </ligand>
</feature>
<sequence length="704" mass="80812">MPVPIIETCRKRKRKPKVYNLQRFGEDGFPIQRNGAFRDQIRVFLRDCAEIEDYDIRGMTVWCTLLSHETKSSLIPLYIVEENVKHSSEPYCDHCRCTGWSNHFVSKRKYHFIIPIDTEWSLPLEDDAFDSQSHVLHGLIHCNGFGHLVCVNGMESGSKYLCGREIVDFWDRLCNSLGARMITVEDLAKKRSVELRLLYGVAYGHSWFGRWGYKFCCGSFGVTKNEYENAIEALGSLEIDQIEFDFGELRQSKEINQVFRYYREMSEGHLKTFRDLLRFMLIIKSHASPQKLLPVTPPLLTDSPHQKRSSRLLLKKSDVADNDKSPKYRNYSTVAANLGSRWPVRRLIFAAEVIVESLKEMKALKQNGMTRQDVRDSARLHIGDTGLLDYVLKSMNNVVVGDVLVRRYVDPITRILHYTIQDLDDAVKAKEPKKKEAVVLEEITPLRILTPLKPGADVYGDLLLLYTNVLLNYPESELVRSATQAILDSKHFIKEWPIWDNNDTVLQFLCRINPSLVDVRSEQTTELPPGELVTVPLQATVYDLKQAIEETFRDTYCILSNFVVTEIDEVEEDMSLIGSCSALTVRGHGIDLESKLKCQGGCDTWMVKCICRARDDDGERMISCDVCEVWQHTRCCGIDDSDTLPPLFVCSNCCEEFAEQQRKVLQPKYEFPSSENVFLLESADDFFGDQRCLGMIFPEENYLL</sequence>